<evidence type="ECO:0000255" key="1">
    <source>
        <dbReference type="HAMAP-Rule" id="MF_00197"/>
    </source>
</evidence>
<comment type="function">
    <text evidence="1">Catalyzes the stereoinversion of LL-2,6-diaminopimelate (L,L-DAP) to meso-diaminopimelate (meso-DAP), a precursor of L-lysine and an essential component of the bacterial peptidoglycan.</text>
</comment>
<comment type="catalytic activity">
    <reaction evidence="1">
        <text>(2S,6S)-2,6-diaminopimelate = meso-2,6-diaminopimelate</text>
        <dbReference type="Rhea" id="RHEA:15393"/>
        <dbReference type="ChEBI" id="CHEBI:57609"/>
        <dbReference type="ChEBI" id="CHEBI:57791"/>
        <dbReference type="EC" id="5.1.1.7"/>
    </reaction>
</comment>
<comment type="pathway">
    <text evidence="1">Amino-acid biosynthesis; L-lysine biosynthesis via DAP pathway; DL-2,6-diaminopimelate from LL-2,6-diaminopimelate: step 1/1.</text>
</comment>
<comment type="subunit">
    <text evidence="1">Homodimer.</text>
</comment>
<comment type="subcellular location">
    <subcellularLocation>
        <location evidence="1">Cytoplasm</location>
    </subcellularLocation>
</comment>
<comment type="similarity">
    <text evidence="1">Belongs to the diaminopimelate epimerase family.</text>
</comment>
<accession>A1RPD2</accession>
<reference key="1">
    <citation type="submission" date="2006-12" db="EMBL/GenBank/DDBJ databases">
        <title>Complete sequence of Shewanella sp. W3-18-1.</title>
        <authorList>
            <consortium name="US DOE Joint Genome Institute"/>
            <person name="Copeland A."/>
            <person name="Lucas S."/>
            <person name="Lapidus A."/>
            <person name="Barry K."/>
            <person name="Detter J.C."/>
            <person name="Glavina del Rio T."/>
            <person name="Hammon N."/>
            <person name="Israni S."/>
            <person name="Dalin E."/>
            <person name="Tice H."/>
            <person name="Pitluck S."/>
            <person name="Chain P."/>
            <person name="Malfatti S."/>
            <person name="Shin M."/>
            <person name="Vergez L."/>
            <person name="Schmutz J."/>
            <person name="Larimer F."/>
            <person name="Land M."/>
            <person name="Hauser L."/>
            <person name="Kyrpides N."/>
            <person name="Lykidis A."/>
            <person name="Tiedje J."/>
            <person name="Richardson P."/>
        </authorList>
    </citation>
    <scope>NUCLEOTIDE SEQUENCE [LARGE SCALE GENOMIC DNA]</scope>
    <source>
        <strain>W3-18-1</strain>
    </source>
</reference>
<dbReference type="EC" id="5.1.1.7" evidence="1"/>
<dbReference type="EMBL" id="CP000503">
    <property type="protein sequence ID" value="ABM26527.1"/>
    <property type="molecule type" value="Genomic_DNA"/>
</dbReference>
<dbReference type="RefSeq" id="WP_011790958.1">
    <property type="nucleotide sequence ID" value="NC_008750.1"/>
</dbReference>
<dbReference type="SMR" id="A1RPD2"/>
<dbReference type="GeneID" id="67445074"/>
<dbReference type="KEGG" id="shw:Sputw3181_3721"/>
<dbReference type="HOGENOM" id="CLU_053306_1_1_6"/>
<dbReference type="UniPathway" id="UPA00034">
    <property type="reaction ID" value="UER00025"/>
</dbReference>
<dbReference type="Proteomes" id="UP000002597">
    <property type="component" value="Chromosome"/>
</dbReference>
<dbReference type="GO" id="GO:0005829">
    <property type="term" value="C:cytosol"/>
    <property type="evidence" value="ECO:0007669"/>
    <property type="project" value="TreeGrafter"/>
</dbReference>
<dbReference type="GO" id="GO:0008837">
    <property type="term" value="F:diaminopimelate epimerase activity"/>
    <property type="evidence" value="ECO:0007669"/>
    <property type="project" value="UniProtKB-UniRule"/>
</dbReference>
<dbReference type="GO" id="GO:0009089">
    <property type="term" value="P:lysine biosynthetic process via diaminopimelate"/>
    <property type="evidence" value="ECO:0007669"/>
    <property type="project" value="UniProtKB-UniRule"/>
</dbReference>
<dbReference type="FunFam" id="3.10.310.10:FF:000001">
    <property type="entry name" value="Diaminopimelate epimerase"/>
    <property type="match status" value="1"/>
</dbReference>
<dbReference type="FunFam" id="3.10.310.10:FF:000002">
    <property type="entry name" value="Diaminopimelate epimerase"/>
    <property type="match status" value="1"/>
</dbReference>
<dbReference type="Gene3D" id="3.10.310.10">
    <property type="entry name" value="Diaminopimelate Epimerase, Chain A, domain 1"/>
    <property type="match status" value="2"/>
</dbReference>
<dbReference type="HAMAP" id="MF_00197">
    <property type="entry name" value="DAP_epimerase"/>
    <property type="match status" value="1"/>
</dbReference>
<dbReference type="InterPro" id="IPR018510">
    <property type="entry name" value="DAP_epimerase_AS"/>
</dbReference>
<dbReference type="InterPro" id="IPR001653">
    <property type="entry name" value="DAP_epimerase_DapF"/>
</dbReference>
<dbReference type="NCBIfam" id="TIGR00652">
    <property type="entry name" value="DapF"/>
    <property type="match status" value="1"/>
</dbReference>
<dbReference type="PANTHER" id="PTHR31689:SF0">
    <property type="entry name" value="DIAMINOPIMELATE EPIMERASE"/>
    <property type="match status" value="1"/>
</dbReference>
<dbReference type="PANTHER" id="PTHR31689">
    <property type="entry name" value="DIAMINOPIMELATE EPIMERASE, CHLOROPLASTIC"/>
    <property type="match status" value="1"/>
</dbReference>
<dbReference type="Pfam" id="PF01678">
    <property type="entry name" value="DAP_epimerase"/>
    <property type="match status" value="2"/>
</dbReference>
<dbReference type="SUPFAM" id="SSF54506">
    <property type="entry name" value="Diaminopimelate epimerase-like"/>
    <property type="match status" value="1"/>
</dbReference>
<dbReference type="PROSITE" id="PS01326">
    <property type="entry name" value="DAP_EPIMERASE"/>
    <property type="match status" value="1"/>
</dbReference>
<sequence length="275" mass="30125">MIQFTKMHGLGNDFMVVDGVTQNVFFSPEQIRRLADRNFGIGFDQLLLVEPPYDPDLDFHYRIFNADGSEVEQCGNGARCFARFVRNKGLTNKNKIRVSTSSGKMTLRLERDGTVTVNMGVPILEPSLIPFKAKKPEKTYLLQTAQQTFLCGAASMGNPHCVLDVEDVASAAVAEIGALLTKHERFPRGVNVGFMQVINSGHIKLRVYERGAAETLACGTGACAAVVVGQIQGKLDQQVRVDLPGGTLTINWEGEGKPLWMTGPAQHVYDGQIQL</sequence>
<organism>
    <name type="scientific">Shewanella sp. (strain W3-18-1)</name>
    <dbReference type="NCBI Taxonomy" id="351745"/>
    <lineage>
        <taxon>Bacteria</taxon>
        <taxon>Pseudomonadati</taxon>
        <taxon>Pseudomonadota</taxon>
        <taxon>Gammaproteobacteria</taxon>
        <taxon>Alteromonadales</taxon>
        <taxon>Shewanellaceae</taxon>
        <taxon>Shewanella</taxon>
    </lineage>
</organism>
<gene>
    <name evidence="1" type="primary">dapF</name>
    <name type="ordered locus">Sputw3181_3721</name>
</gene>
<feature type="chain" id="PRO_1000011969" description="Diaminopimelate epimerase">
    <location>
        <begin position="1"/>
        <end position="275"/>
    </location>
</feature>
<feature type="active site" description="Proton donor" evidence="1">
    <location>
        <position position="74"/>
    </location>
</feature>
<feature type="active site" description="Proton acceptor" evidence="1">
    <location>
        <position position="218"/>
    </location>
</feature>
<feature type="binding site" evidence="1">
    <location>
        <position position="12"/>
    </location>
    <ligand>
        <name>substrate</name>
    </ligand>
</feature>
<feature type="binding site" evidence="1">
    <location>
        <position position="45"/>
    </location>
    <ligand>
        <name>substrate</name>
    </ligand>
</feature>
<feature type="binding site" evidence="1">
    <location>
        <position position="65"/>
    </location>
    <ligand>
        <name>substrate</name>
    </ligand>
</feature>
<feature type="binding site" evidence="1">
    <location>
        <begin position="75"/>
        <end position="76"/>
    </location>
    <ligand>
        <name>substrate</name>
    </ligand>
</feature>
<feature type="binding site" evidence="1">
    <location>
        <position position="158"/>
    </location>
    <ligand>
        <name>substrate</name>
    </ligand>
</feature>
<feature type="binding site" evidence="1">
    <location>
        <position position="191"/>
    </location>
    <ligand>
        <name>substrate</name>
    </ligand>
</feature>
<feature type="binding site" evidence="1">
    <location>
        <begin position="209"/>
        <end position="210"/>
    </location>
    <ligand>
        <name>substrate</name>
    </ligand>
</feature>
<feature type="binding site" evidence="1">
    <location>
        <begin position="219"/>
        <end position="220"/>
    </location>
    <ligand>
        <name>substrate</name>
    </ligand>
</feature>
<feature type="site" description="Could be important to modulate the pK values of the two catalytic cysteine residues" evidence="1">
    <location>
        <position position="160"/>
    </location>
</feature>
<feature type="site" description="Could be important to modulate the pK values of the two catalytic cysteine residues" evidence="1">
    <location>
        <position position="209"/>
    </location>
</feature>
<feature type="site" description="Important for dimerization" evidence="1">
    <location>
        <position position="269"/>
    </location>
</feature>
<keyword id="KW-0028">Amino-acid biosynthesis</keyword>
<keyword id="KW-0963">Cytoplasm</keyword>
<keyword id="KW-0413">Isomerase</keyword>
<keyword id="KW-0457">Lysine biosynthesis</keyword>
<protein>
    <recommendedName>
        <fullName evidence="1">Diaminopimelate epimerase</fullName>
        <shortName evidence="1">DAP epimerase</shortName>
        <ecNumber evidence="1">5.1.1.7</ecNumber>
    </recommendedName>
    <alternativeName>
        <fullName evidence="1">PLP-independent amino acid racemase</fullName>
    </alternativeName>
</protein>
<name>DAPF_SHESW</name>
<proteinExistence type="inferred from homology"/>